<keyword id="KW-0687">Ribonucleoprotein</keyword>
<keyword id="KW-0689">Ribosomal protein</keyword>
<keyword id="KW-0694">RNA-binding</keyword>
<keyword id="KW-0699">rRNA-binding</keyword>
<keyword id="KW-0820">tRNA-binding</keyword>
<gene>
    <name evidence="1" type="primary">rplP</name>
    <name type="ordered locus">Bcep1808_0337</name>
</gene>
<dbReference type="EMBL" id="CP000614">
    <property type="protein sequence ID" value="ABO53350.1"/>
    <property type="molecule type" value="Genomic_DNA"/>
</dbReference>
<dbReference type="SMR" id="A4JAP7"/>
<dbReference type="KEGG" id="bvi:Bcep1808_0337"/>
<dbReference type="eggNOG" id="COG0197">
    <property type="taxonomic scope" value="Bacteria"/>
</dbReference>
<dbReference type="HOGENOM" id="CLU_078858_2_1_4"/>
<dbReference type="Proteomes" id="UP000002287">
    <property type="component" value="Chromosome 1"/>
</dbReference>
<dbReference type="GO" id="GO:0022625">
    <property type="term" value="C:cytosolic large ribosomal subunit"/>
    <property type="evidence" value="ECO:0007669"/>
    <property type="project" value="TreeGrafter"/>
</dbReference>
<dbReference type="GO" id="GO:0019843">
    <property type="term" value="F:rRNA binding"/>
    <property type="evidence" value="ECO:0007669"/>
    <property type="project" value="UniProtKB-UniRule"/>
</dbReference>
<dbReference type="GO" id="GO:0003735">
    <property type="term" value="F:structural constituent of ribosome"/>
    <property type="evidence" value="ECO:0007669"/>
    <property type="project" value="InterPro"/>
</dbReference>
<dbReference type="GO" id="GO:0000049">
    <property type="term" value="F:tRNA binding"/>
    <property type="evidence" value="ECO:0007669"/>
    <property type="project" value="UniProtKB-KW"/>
</dbReference>
<dbReference type="GO" id="GO:0006412">
    <property type="term" value="P:translation"/>
    <property type="evidence" value="ECO:0007669"/>
    <property type="project" value="UniProtKB-UniRule"/>
</dbReference>
<dbReference type="CDD" id="cd01433">
    <property type="entry name" value="Ribosomal_L16_L10e"/>
    <property type="match status" value="1"/>
</dbReference>
<dbReference type="FunFam" id="3.90.1170.10:FF:000001">
    <property type="entry name" value="50S ribosomal protein L16"/>
    <property type="match status" value="1"/>
</dbReference>
<dbReference type="Gene3D" id="3.90.1170.10">
    <property type="entry name" value="Ribosomal protein L10e/L16"/>
    <property type="match status" value="1"/>
</dbReference>
<dbReference type="HAMAP" id="MF_01342">
    <property type="entry name" value="Ribosomal_uL16"/>
    <property type="match status" value="1"/>
</dbReference>
<dbReference type="InterPro" id="IPR047873">
    <property type="entry name" value="Ribosomal_uL16"/>
</dbReference>
<dbReference type="InterPro" id="IPR000114">
    <property type="entry name" value="Ribosomal_uL16_bact-type"/>
</dbReference>
<dbReference type="InterPro" id="IPR020798">
    <property type="entry name" value="Ribosomal_uL16_CS"/>
</dbReference>
<dbReference type="InterPro" id="IPR016180">
    <property type="entry name" value="Ribosomal_uL16_dom"/>
</dbReference>
<dbReference type="InterPro" id="IPR036920">
    <property type="entry name" value="Ribosomal_uL16_sf"/>
</dbReference>
<dbReference type="NCBIfam" id="TIGR01164">
    <property type="entry name" value="rplP_bact"/>
    <property type="match status" value="1"/>
</dbReference>
<dbReference type="PANTHER" id="PTHR12220">
    <property type="entry name" value="50S/60S RIBOSOMAL PROTEIN L16"/>
    <property type="match status" value="1"/>
</dbReference>
<dbReference type="PANTHER" id="PTHR12220:SF13">
    <property type="entry name" value="LARGE RIBOSOMAL SUBUNIT PROTEIN UL16M"/>
    <property type="match status" value="1"/>
</dbReference>
<dbReference type="Pfam" id="PF00252">
    <property type="entry name" value="Ribosomal_L16"/>
    <property type="match status" value="1"/>
</dbReference>
<dbReference type="PRINTS" id="PR00060">
    <property type="entry name" value="RIBOSOMALL16"/>
</dbReference>
<dbReference type="SUPFAM" id="SSF54686">
    <property type="entry name" value="Ribosomal protein L16p/L10e"/>
    <property type="match status" value="1"/>
</dbReference>
<dbReference type="PROSITE" id="PS00586">
    <property type="entry name" value="RIBOSOMAL_L16_1"/>
    <property type="match status" value="1"/>
</dbReference>
<organism>
    <name type="scientific">Burkholderia vietnamiensis (strain G4 / LMG 22486)</name>
    <name type="common">Burkholderia cepacia (strain R1808)</name>
    <dbReference type="NCBI Taxonomy" id="269482"/>
    <lineage>
        <taxon>Bacteria</taxon>
        <taxon>Pseudomonadati</taxon>
        <taxon>Pseudomonadota</taxon>
        <taxon>Betaproteobacteria</taxon>
        <taxon>Burkholderiales</taxon>
        <taxon>Burkholderiaceae</taxon>
        <taxon>Burkholderia</taxon>
        <taxon>Burkholderia cepacia complex</taxon>
    </lineage>
</organism>
<name>RL16_BURVG</name>
<proteinExistence type="inferred from homology"/>
<sequence>MLQPKRRKYRKEQKGRNTGKATRGNAVSFGEFGLKAIGRGRLTARQIEAARRAMTRHIKRGGRIWIRIFPDKPISQKPAEVRMGNGKGNPEYYVAEIQPGKMLYEMDGVTEELAREAFRLAAAKLPLKTAFIVRQLGA</sequence>
<comment type="function">
    <text evidence="1">Binds 23S rRNA and is also seen to make contacts with the A and possibly P site tRNAs.</text>
</comment>
<comment type="subunit">
    <text evidence="1">Part of the 50S ribosomal subunit.</text>
</comment>
<comment type="similarity">
    <text evidence="1">Belongs to the universal ribosomal protein uL16 family.</text>
</comment>
<protein>
    <recommendedName>
        <fullName evidence="1">Large ribosomal subunit protein uL16</fullName>
    </recommendedName>
    <alternativeName>
        <fullName evidence="3">50S ribosomal protein L16</fullName>
    </alternativeName>
</protein>
<reference key="1">
    <citation type="submission" date="2007-03" db="EMBL/GenBank/DDBJ databases">
        <title>Complete sequence of chromosome 1 of Burkholderia vietnamiensis G4.</title>
        <authorList>
            <consortium name="US DOE Joint Genome Institute"/>
            <person name="Copeland A."/>
            <person name="Lucas S."/>
            <person name="Lapidus A."/>
            <person name="Barry K."/>
            <person name="Detter J.C."/>
            <person name="Glavina del Rio T."/>
            <person name="Hammon N."/>
            <person name="Israni S."/>
            <person name="Dalin E."/>
            <person name="Tice H."/>
            <person name="Pitluck S."/>
            <person name="Chain P."/>
            <person name="Malfatti S."/>
            <person name="Shin M."/>
            <person name="Vergez L."/>
            <person name="Schmutz J."/>
            <person name="Larimer F."/>
            <person name="Land M."/>
            <person name="Hauser L."/>
            <person name="Kyrpides N."/>
            <person name="Tiedje J."/>
            <person name="Richardson P."/>
        </authorList>
    </citation>
    <scope>NUCLEOTIDE SEQUENCE [LARGE SCALE GENOMIC DNA]</scope>
    <source>
        <strain>G4 / LMG 22486</strain>
    </source>
</reference>
<accession>A4JAP7</accession>
<evidence type="ECO:0000255" key="1">
    <source>
        <dbReference type="HAMAP-Rule" id="MF_01342"/>
    </source>
</evidence>
<evidence type="ECO:0000256" key="2">
    <source>
        <dbReference type="SAM" id="MobiDB-lite"/>
    </source>
</evidence>
<evidence type="ECO:0000305" key="3"/>
<feature type="chain" id="PRO_1000054594" description="Large ribosomal subunit protein uL16">
    <location>
        <begin position="1"/>
        <end position="138"/>
    </location>
</feature>
<feature type="region of interest" description="Disordered" evidence="2">
    <location>
        <begin position="1"/>
        <end position="24"/>
    </location>
</feature>
<feature type="compositionally biased region" description="Basic residues" evidence="2">
    <location>
        <begin position="1"/>
        <end position="13"/>
    </location>
</feature>